<protein>
    <recommendedName>
        <fullName>Zinc finger CCCH-type antiviral protein 1</fullName>
    </recommendedName>
    <alternativeName>
        <fullName evidence="23">ADP-ribosyltransferase diphtheria toxin-like 13</fullName>
        <shortName evidence="23">ARTD13</shortName>
    </alternativeName>
    <alternativeName>
        <fullName evidence="27">Inactive Poly [ADP-ribose] polymerase 13</fullName>
        <shortName evidence="25">PARP13</shortName>
    </alternativeName>
    <alternativeName>
        <fullName>Zinc finger CCCH domain-containing protein 2</fullName>
    </alternativeName>
    <alternativeName>
        <fullName>Zinc finger antiviral protein</fullName>
        <shortName>ZAP</shortName>
    </alternativeName>
</protein>
<accession>Q7Z2W4</accession>
<accession>A4D1R2</accession>
<accession>A4D1S4</accession>
<accession>Q8IW57</accession>
<accession>Q8TAJ3</accession>
<accession>Q96N79</accession>
<accession>Q9H8R9</accession>
<accession>Q9P0Y7</accession>
<feature type="initiator methionine" description="Removed" evidence="33 37">
    <location>
        <position position="1"/>
    </location>
</feature>
<feature type="chain" id="PRO_0000211343" description="Zinc finger CCCH-type antiviral protein 1">
    <location>
        <begin position="2"/>
        <end position="902"/>
    </location>
</feature>
<feature type="domain" description="WWE" evidence="4">
    <location>
        <begin position="594"/>
        <end position="681"/>
    </location>
</feature>
<feature type="domain" description="PARP catalytic" evidence="5">
    <location>
        <begin position="716"/>
        <end position="902"/>
    </location>
</feature>
<feature type="zinc finger region" description="C3H1-type 1" evidence="6">
    <location>
        <begin position="73"/>
        <end position="86"/>
    </location>
</feature>
<feature type="zinc finger region" description="C3H1-type 2" evidence="6">
    <location>
        <begin position="88"/>
        <end position="110"/>
    </location>
</feature>
<feature type="zinc finger region" description="C3H1-type 3" evidence="6">
    <location>
        <begin position="150"/>
        <end position="172"/>
    </location>
</feature>
<feature type="zinc finger region" description="C3H1-type 4" evidence="6">
    <location>
        <begin position="169"/>
        <end position="193"/>
    </location>
</feature>
<feature type="region of interest" description="N-terminal domain">
    <location>
        <begin position="2"/>
        <end position="254"/>
    </location>
</feature>
<feature type="region of interest" description="Disordered" evidence="7">
    <location>
        <begin position="221"/>
        <end position="251"/>
    </location>
</feature>
<feature type="region of interest" description="Binding to EXOSC5" evidence="1">
    <location>
        <begin position="224"/>
        <end position="254"/>
    </location>
</feature>
<feature type="region of interest" description="Disordered" evidence="7">
    <location>
        <begin position="265"/>
        <end position="287"/>
    </location>
</feature>
<feature type="region of interest" description="Disordered" evidence="7">
    <location>
        <begin position="299"/>
        <end position="373"/>
    </location>
</feature>
<feature type="region of interest" description="Disordered" evidence="7">
    <location>
        <begin position="445"/>
        <end position="481"/>
    </location>
</feature>
<feature type="short sequence motif" description="Nuclear localization signal" evidence="1">
    <location>
        <begin position="69"/>
        <end position="76"/>
    </location>
</feature>
<feature type="short sequence motif" description="Nuclear export signal" evidence="1">
    <location>
        <begin position="285"/>
        <end position="292"/>
    </location>
</feature>
<feature type="compositionally biased region" description="Basic residues" evidence="7">
    <location>
        <begin position="235"/>
        <end position="247"/>
    </location>
</feature>
<feature type="compositionally biased region" description="Polar residues" evidence="7">
    <location>
        <begin position="265"/>
        <end position="278"/>
    </location>
</feature>
<feature type="compositionally biased region" description="Polar residues" evidence="7">
    <location>
        <begin position="310"/>
        <end position="336"/>
    </location>
</feature>
<feature type="compositionally biased region" description="Polar residues" evidence="7">
    <location>
        <begin position="344"/>
        <end position="369"/>
    </location>
</feature>
<feature type="modified residue" description="N-acetylalanine" evidence="33 37">
    <location>
        <position position="2"/>
    </location>
</feature>
<feature type="modified residue" description="Phosphoserine; by GSK3-beta" evidence="34 38">
    <location>
        <position position="257"/>
    </location>
</feature>
<feature type="modified residue" description="Phosphoserine; by GSK3-beta" evidence="3">
    <location>
        <position position="263"/>
    </location>
</feature>
<feature type="modified residue" description="Phosphoserine; by GSK3-beta" evidence="3">
    <location>
        <position position="267"/>
    </location>
</feature>
<feature type="modified residue" description="Phosphoserine; by GSK3-beta" evidence="32">
    <location>
        <position position="271"/>
    </location>
</feature>
<feature type="modified residue" description="Phosphothreonine" evidence="32 38">
    <location>
        <position position="273"/>
    </location>
</feature>
<feature type="modified residue" description="Phosphoserine" evidence="32 38 39">
    <location>
        <position position="275"/>
    </location>
</feature>
<feature type="modified residue" description="Phosphoserine" evidence="29 30 31 32 34 35 36 38 39">
    <location>
        <position position="284"/>
    </location>
</feature>
<feature type="modified residue" description="Phosphoserine" evidence="32 35 38">
    <location>
        <position position="302"/>
    </location>
</feature>
<feature type="modified residue" description="Phosphoserine" evidence="2">
    <location>
        <position position="327"/>
    </location>
</feature>
<feature type="modified residue" description="Phosphoserine" evidence="34 35 38">
    <location>
        <position position="335"/>
    </location>
</feature>
<feature type="modified residue" description="Phosphoserine" evidence="38">
    <location>
        <position position="355"/>
    </location>
</feature>
<feature type="modified residue" description="Phosphoserine" evidence="32 35 38">
    <location>
        <position position="378"/>
    </location>
</feature>
<feature type="modified residue" description="Phosphoserine" evidence="32 34">
    <location>
        <position position="387"/>
    </location>
</feature>
<feature type="modified residue" description="Phosphothreonine" evidence="32 34 35 38">
    <location>
        <position position="393"/>
    </location>
</feature>
<feature type="modified residue" description="Phosphoserine" evidence="38">
    <location>
        <position position="407"/>
    </location>
</feature>
<feature type="modified residue" description="Phosphoserine" evidence="38">
    <location>
        <position position="469"/>
    </location>
</feature>
<feature type="modified residue" description="Phosphoserine" evidence="35 38 39">
    <location>
        <position position="492"/>
    </location>
</feature>
<feature type="modified residue" description="Phosphoserine" evidence="38">
    <location>
        <position position="494"/>
    </location>
</feature>
<feature type="modified residue" description="Phosphothreonine" evidence="38">
    <location>
        <position position="554"/>
    </location>
</feature>
<feature type="modified residue" description="Phosphoserine" evidence="38">
    <location>
        <position position="590"/>
    </location>
</feature>
<feature type="splice variant" id="VSP_010268" description="In isoform 4 and isoform 5." evidence="21 26">
    <location>
        <begin position="1"/>
        <end position="539"/>
    </location>
</feature>
<feature type="splice variant" id="VSP_010270" description="In isoform 3." evidence="21">
    <original>DSLSDVTSTTSSRVDDHDSEEICLDHLCKGCPLNGSCSKVHFHLPYRWQMLIGKTWTDFEHMETIEKGYCNPGIHLCSVGSYTINFRVMSCDSFPIRRLSTPSSVTKPANSVFTTKWIWYWKNESGTWIQYGEE</original>
    <variation>GKYKGKTLWASTFVHDIPNGSSQVVDKTTDVEKTGATGFGLTMAVKAEKDMLCTGSQSLRNLVPTTPGESTAPAQVSTLPQSPAALSSSNRAAVWGAQGQNCTQVPVSSASELTRKTTGSAQCKSLKDKGASVS</variation>
    <location>
        <begin position="491"/>
        <end position="624"/>
    </location>
</feature>
<feature type="splice variant" id="VSP_010271" description="In isoform 3." evidence="21">
    <location>
        <begin position="625"/>
        <end position="902"/>
    </location>
</feature>
<feature type="splice variant" id="VSP_010269" description="In isoform 2 and isoform 5." evidence="22 26">
    <original>DHQPAKTSSVSLTATFRPQEDFCFLSSKKYKLSEIHHLHPEYVRVSEHFKASMKNFKIEKIKKIENSELLDKFTWKKSQMKEEGKLLFYATSRAYVESICSNNFDSFLHETHENKYGKGIYFAKDAIYSHKNCPYDAKNVVMFVAQVLVGKFTEGNITYTSPPPQFDSCVDTRSNPSVFVIFQKDQVYPQYVIEYTEDKACVIS</original>
    <variation>E</variation>
    <location>
        <begin position="699"/>
        <end position="902"/>
    </location>
</feature>
<feature type="sequence variant" id="VAR_018454" description="In dbSNP:rs2236426." evidence="8">
    <original>R</original>
    <variation>K</variation>
    <location>
        <position position="485"/>
    </location>
</feature>
<feature type="sequence variant" id="VAR_018455" description="In dbSNP:rs2297241." evidence="8 20">
    <original>H</original>
    <variation>Q</variation>
    <location>
        <position position="565"/>
    </location>
</feature>
<feature type="sequence variant" id="VAR_054319" description="In dbSNP:rs2297236." evidence="8 9 10">
    <original>Q</original>
    <variation>E</variation>
    <location>
        <position position="701"/>
    </location>
</feature>
<feature type="sequence variant" id="VAR_018456" description="In dbSNP:rs3735007." evidence="9 10">
    <original>T</original>
    <variation>I</variation>
    <location>
        <position position="851"/>
    </location>
</feature>
<feature type="mutagenesis site" description="No effect on the structural inability to bind NAD(+); when associated with Y-830." evidence="19">
    <original>H</original>
    <variation>N</variation>
    <location>
        <position position="810"/>
    </location>
</feature>
<feature type="mutagenesis site" description="No effect on the structural inability to bind NAD(+); when associated with N-810." evidence="19">
    <original>N</original>
    <variation>Y</variation>
    <location>
        <position position="830"/>
    </location>
</feature>
<feature type="sequence conflict" description="In Ref. 3; CAE11868." evidence="27" ref="3">
    <original>A</original>
    <variation>T</variation>
    <location>
        <position position="245"/>
    </location>
</feature>
<feature type="helix" evidence="42">
    <location>
        <begin position="4"/>
        <end position="16"/>
    </location>
</feature>
<feature type="turn" evidence="42">
    <location>
        <begin position="17"/>
        <end position="19"/>
    </location>
</feature>
<feature type="strand" evidence="42">
    <location>
        <begin position="20"/>
        <end position="22"/>
    </location>
</feature>
<feature type="helix" evidence="42">
    <location>
        <begin position="23"/>
        <end position="30"/>
    </location>
</feature>
<feature type="helix" evidence="42">
    <location>
        <begin position="34"/>
        <end position="44"/>
    </location>
</feature>
<feature type="turn" evidence="42">
    <location>
        <begin position="46"/>
        <end position="48"/>
    </location>
</feature>
<feature type="strand" evidence="42">
    <location>
        <begin position="49"/>
        <end position="52"/>
    </location>
</feature>
<feature type="strand" evidence="42">
    <location>
        <begin position="63"/>
        <end position="66"/>
    </location>
</feature>
<feature type="strand" evidence="42">
    <location>
        <begin position="83"/>
        <end position="85"/>
    </location>
</feature>
<feature type="helix" evidence="42">
    <location>
        <begin position="89"/>
        <end position="92"/>
    </location>
</feature>
<feature type="helix" evidence="42">
    <location>
        <begin position="115"/>
        <end position="123"/>
    </location>
</feature>
<feature type="helix" evidence="42">
    <location>
        <begin position="131"/>
        <end position="141"/>
    </location>
</feature>
<feature type="helix" evidence="42">
    <location>
        <begin position="143"/>
        <end position="145"/>
    </location>
</feature>
<feature type="strand" evidence="42">
    <location>
        <begin position="156"/>
        <end position="159"/>
    </location>
</feature>
<feature type="strand" evidence="41">
    <location>
        <begin position="161"/>
        <end position="163"/>
    </location>
</feature>
<feature type="helix" evidence="42">
    <location>
        <begin position="175"/>
        <end position="178"/>
    </location>
</feature>
<feature type="helix" evidence="42">
    <location>
        <begin position="196"/>
        <end position="204"/>
    </location>
</feature>
<feature type="helix" evidence="42">
    <location>
        <begin position="209"/>
        <end position="224"/>
    </location>
</feature>
<feature type="helix" evidence="43">
    <location>
        <begin position="514"/>
        <end position="517"/>
    </location>
</feature>
<feature type="helix" evidence="43">
    <location>
        <begin position="524"/>
        <end position="526"/>
    </location>
</feature>
<feature type="strand" evidence="43">
    <location>
        <begin position="528"/>
        <end position="530"/>
    </location>
</feature>
<feature type="strand" evidence="43">
    <location>
        <begin position="533"/>
        <end position="542"/>
    </location>
</feature>
<feature type="strand" evidence="43">
    <location>
        <begin position="545"/>
        <end position="548"/>
    </location>
</feature>
<feature type="helix" evidence="43">
    <location>
        <begin position="552"/>
        <end position="559"/>
    </location>
</feature>
<feature type="strand" evidence="43">
    <location>
        <begin position="566"/>
        <end position="569"/>
    </location>
</feature>
<feature type="strand" evidence="43">
    <location>
        <begin position="572"/>
        <end position="575"/>
    </location>
</feature>
<feature type="turn" evidence="43">
    <location>
        <begin position="576"/>
        <end position="579"/>
    </location>
</feature>
<feature type="strand" evidence="43">
    <location>
        <begin position="584"/>
        <end position="590"/>
    </location>
</feature>
<feature type="helix" evidence="43">
    <location>
        <begin position="594"/>
        <end position="596"/>
    </location>
</feature>
<feature type="strand" evidence="43">
    <location>
        <begin position="607"/>
        <end position="612"/>
    </location>
</feature>
<feature type="strand" evidence="43">
    <location>
        <begin position="618"/>
        <end position="620"/>
    </location>
</feature>
<feature type="helix" evidence="43">
    <location>
        <begin position="635"/>
        <end position="644"/>
    </location>
</feature>
<feature type="strand" evidence="43">
    <location>
        <begin position="649"/>
        <end position="654"/>
    </location>
</feature>
<feature type="strand" evidence="43">
    <location>
        <begin position="657"/>
        <end position="662"/>
    </location>
</feature>
<feature type="turn" evidence="43">
    <location>
        <begin position="663"/>
        <end position="666"/>
    </location>
</feature>
<feature type="strand" evidence="43">
    <location>
        <begin position="667"/>
        <end position="670"/>
    </location>
</feature>
<feature type="turn" evidence="43">
    <location>
        <begin position="671"/>
        <end position="673"/>
    </location>
</feature>
<feature type="strand" evidence="43">
    <location>
        <begin position="676"/>
        <end position="683"/>
    </location>
</feature>
<feature type="helix" evidence="43">
    <location>
        <begin position="688"/>
        <end position="695"/>
    </location>
</feature>
<feature type="strand" evidence="40">
    <location>
        <begin position="729"/>
        <end position="732"/>
    </location>
</feature>
<feature type="helix" evidence="40">
    <location>
        <begin position="738"/>
        <end position="748"/>
    </location>
</feature>
<feature type="strand" evidence="40">
    <location>
        <begin position="754"/>
        <end position="763"/>
    </location>
</feature>
<feature type="helix" evidence="40">
    <location>
        <begin position="765"/>
        <end position="778"/>
    </location>
</feature>
<feature type="strand" evidence="40">
    <location>
        <begin position="783"/>
        <end position="790"/>
    </location>
</feature>
<feature type="helix" evidence="40">
    <location>
        <begin position="791"/>
        <end position="793"/>
    </location>
</feature>
<feature type="helix" evidence="40">
    <location>
        <begin position="794"/>
        <end position="800"/>
    </location>
</feature>
<feature type="helix" evidence="40">
    <location>
        <begin position="804"/>
        <end position="807"/>
    </location>
</feature>
<feature type="strand" evidence="40">
    <location>
        <begin position="812"/>
        <end position="814"/>
    </location>
</feature>
<feature type="strand" evidence="40">
    <location>
        <begin position="816"/>
        <end position="823"/>
    </location>
</feature>
<feature type="helix" evidence="40">
    <location>
        <begin position="824"/>
        <end position="830"/>
    </location>
</feature>
<feature type="helix" evidence="40">
    <location>
        <begin position="835"/>
        <end position="837"/>
    </location>
</feature>
<feature type="strand" evidence="40">
    <location>
        <begin position="838"/>
        <end position="845"/>
    </location>
</feature>
<feature type="strand" evidence="40">
    <location>
        <begin position="849"/>
        <end position="852"/>
    </location>
</feature>
<feature type="strand" evidence="40">
    <location>
        <begin position="866"/>
        <end position="869"/>
    </location>
</feature>
<feature type="strand" evidence="40">
    <location>
        <begin position="871"/>
        <end position="873"/>
    </location>
</feature>
<feature type="strand" evidence="40">
    <location>
        <begin position="876"/>
        <end position="879"/>
    </location>
</feature>
<feature type="helix" evidence="40">
    <location>
        <begin position="882"/>
        <end position="884"/>
    </location>
</feature>
<feature type="strand" evidence="40">
    <location>
        <begin position="885"/>
        <end position="895"/>
    </location>
</feature>
<feature type="modified residue" description="Phosphoserine" evidence="35">
    <location sequence="Q7Z2W4-3">
        <position position="572"/>
    </location>
</feature>
<reference key="1">
    <citation type="submission" date="1999-03" db="EMBL/GenBank/DDBJ databases">
        <title>Functional prediction of the coding sequences of 5 new genes deduced by analysis of cDNA clones from human fetal liver.</title>
        <authorList>
            <person name="Zhang C."/>
            <person name="Yu Y."/>
            <person name="Zhang S."/>
            <person name="Zhou G."/>
            <person name="Wei H."/>
            <person name="Bi J."/>
            <person name="Xu W."/>
            <person name="Zai Y."/>
            <person name="Feng F."/>
            <person name="Liu M."/>
            <person name="He F."/>
        </authorList>
    </citation>
    <scope>NUCLEOTIDE SEQUENCE [LARGE SCALE MRNA] (ISOFORM 5)</scope>
    <scope>VARIANT GLN-565</scope>
    <source>
        <tissue>Fetal liver</tissue>
    </source>
</reference>
<reference key="2">
    <citation type="journal article" date="2004" name="Nat. Genet.">
        <title>Complete sequencing and characterization of 21,243 full-length human cDNAs.</title>
        <authorList>
            <person name="Ota T."/>
            <person name="Suzuki Y."/>
            <person name="Nishikawa T."/>
            <person name="Otsuki T."/>
            <person name="Sugiyama T."/>
            <person name="Irie R."/>
            <person name="Wakamatsu A."/>
            <person name="Hayashi K."/>
            <person name="Sato H."/>
            <person name="Nagai K."/>
            <person name="Kimura K."/>
            <person name="Makita H."/>
            <person name="Sekine M."/>
            <person name="Obayashi M."/>
            <person name="Nishi T."/>
            <person name="Shibahara T."/>
            <person name="Tanaka T."/>
            <person name="Ishii S."/>
            <person name="Yamamoto J."/>
            <person name="Saito K."/>
            <person name="Kawai Y."/>
            <person name="Isono Y."/>
            <person name="Nakamura Y."/>
            <person name="Nagahari K."/>
            <person name="Murakami K."/>
            <person name="Yasuda T."/>
            <person name="Iwayanagi T."/>
            <person name="Wagatsuma M."/>
            <person name="Shiratori A."/>
            <person name="Sudo H."/>
            <person name="Hosoiri T."/>
            <person name="Kaku Y."/>
            <person name="Kodaira H."/>
            <person name="Kondo H."/>
            <person name="Sugawara M."/>
            <person name="Takahashi M."/>
            <person name="Kanda K."/>
            <person name="Yokoi T."/>
            <person name="Furuya T."/>
            <person name="Kikkawa E."/>
            <person name="Omura Y."/>
            <person name="Abe K."/>
            <person name="Kamihara K."/>
            <person name="Katsuta N."/>
            <person name="Sato K."/>
            <person name="Tanikawa M."/>
            <person name="Yamazaki M."/>
            <person name="Ninomiya K."/>
            <person name="Ishibashi T."/>
            <person name="Yamashita H."/>
            <person name="Murakawa K."/>
            <person name="Fujimori K."/>
            <person name="Tanai H."/>
            <person name="Kimata M."/>
            <person name="Watanabe M."/>
            <person name="Hiraoka S."/>
            <person name="Chiba Y."/>
            <person name="Ishida S."/>
            <person name="Ono Y."/>
            <person name="Takiguchi S."/>
            <person name="Watanabe S."/>
            <person name="Yosida M."/>
            <person name="Hotuta T."/>
            <person name="Kusano J."/>
            <person name="Kanehori K."/>
            <person name="Takahashi-Fujii A."/>
            <person name="Hara H."/>
            <person name="Tanase T.-O."/>
            <person name="Nomura Y."/>
            <person name="Togiya S."/>
            <person name="Komai F."/>
            <person name="Hara R."/>
            <person name="Takeuchi K."/>
            <person name="Arita M."/>
            <person name="Imose N."/>
            <person name="Musashino K."/>
            <person name="Yuuki H."/>
            <person name="Oshima A."/>
            <person name="Sasaki N."/>
            <person name="Aotsuka S."/>
            <person name="Yoshikawa Y."/>
            <person name="Matsunawa H."/>
            <person name="Ichihara T."/>
            <person name="Shiohata N."/>
            <person name="Sano S."/>
            <person name="Moriya S."/>
            <person name="Momiyama H."/>
            <person name="Satoh N."/>
            <person name="Takami S."/>
            <person name="Terashima Y."/>
            <person name="Suzuki O."/>
            <person name="Nakagawa S."/>
            <person name="Senoh A."/>
            <person name="Mizoguchi H."/>
            <person name="Goto Y."/>
            <person name="Shimizu F."/>
            <person name="Wakebe H."/>
            <person name="Hishigaki H."/>
            <person name="Watanabe T."/>
            <person name="Sugiyama A."/>
            <person name="Takemoto M."/>
            <person name="Kawakami B."/>
            <person name="Yamazaki M."/>
            <person name="Watanabe K."/>
            <person name="Kumagai A."/>
            <person name="Itakura S."/>
            <person name="Fukuzumi Y."/>
            <person name="Fujimori Y."/>
            <person name="Komiyama M."/>
            <person name="Tashiro H."/>
            <person name="Tanigami A."/>
            <person name="Fujiwara T."/>
            <person name="Ono T."/>
            <person name="Yamada K."/>
            <person name="Fujii Y."/>
            <person name="Ozaki K."/>
            <person name="Hirao M."/>
            <person name="Ohmori Y."/>
            <person name="Kawabata A."/>
            <person name="Hikiji T."/>
            <person name="Kobatake N."/>
            <person name="Inagaki H."/>
            <person name="Ikema Y."/>
            <person name="Okamoto S."/>
            <person name="Okitani R."/>
            <person name="Kawakami T."/>
            <person name="Noguchi S."/>
            <person name="Itoh T."/>
            <person name="Shigeta K."/>
            <person name="Senba T."/>
            <person name="Matsumura K."/>
            <person name="Nakajima Y."/>
            <person name="Mizuno T."/>
            <person name="Morinaga M."/>
            <person name="Sasaki M."/>
            <person name="Togashi T."/>
            <person name="Oyama M."/>
            <person name="Hata H."/>
            <person name="Watanabe M."/>
            <person name="Komatsu T."/>
            <person name="Mizushima-Sugano J."/>
            <person name="Satoh T."/>
            <person name="Shirai Y."/>
            <person name="Takahashi Y."/>
            <person name="Nakagawa K."/>
            <person name="Okumura K."/>
            <person name="Nagase T."/>
            <person name="Nomura N."/>
            <person name="Kikuchi H."/>
            <person name="Masuho Y."/>
            <person name="Yamashita R."/>
            <person name="Nakai K."/>
            <person name="Yada T."/>
            <person name="Nakamura Y."/>
            <person name="Ohara O."/>
            <person name="Isogai T."/>
            <person name="Sugano S."/>
        </authorList>
    </citation>
    <scope>NUCLEOTIDE SEQUENCE [LARGE SCALE MRNA] (ISOFORMS 3 AND 4)</scope>
    <scope>VARIANTS LYS-485; GLN-565 AND GLU-701</scope>
    <source>
        <tissue>Kidney</tissue>
        <tissue>Ovarian carcinoma</tissue>
    </source>
</reference>
<reference key="3">
    <citation type="journal article" date="2007" name="BMC Genomics">
        <title>The full-ORF clone resource of the German cDNA consortium.</title>
        <authorList>
            <person name="Bechtel S."/>
            <person name="Rosenfelder H."/>
            <person name="Duda A."/>
            <person name="Schmidt C.P."/>
            <person name="Ernst U."/>
            <person name="Wellenreuther R."/>
            <person name="Mehrle A."/>
            <person name="Schuster C."/>
            <person name="Bahr A."/>
            <person name="Bloecker H."/>
            <person name="Heubner D."/>
            <person name="Hoerlein A."/>
            <person name="Michel G."/>
            <person name="Wedler H."/>
            <person name="Koehrer K."/>
            <person name="Ottenwaelder B."/>
            <person name="Poustka A."/>
            <person name="Wiemann S."/>
            <person name="Schupp I."/>
        </authorList>
    </citation>
    <scope>NUCLEOTIDE SEQUENCE [LARGE SCALE MRNA] (ISOFORM 1)</scope>
    <scope>VARIANTS GLU-701 AND ILE-851</scope>
    <source>
        <tissue>Endometrium</tissue>
    </source>
</reference>
<reference key="4">
    <citation type="journal article" date="2003" name="Science">
        <title>Human chromosome 7: DNA sequence and biology.</title>
        <authorList>
            <person name="Scherer S.W."/>
            <person name="Cheung J."/>
            <person name="MacDonald J.R."/>
            <person name="Osborne L.R."/>
            <person name="Nakabayashi K."/>
            <person name="Herbrick J.-A."/>
            <person name="Carson A.R."/>
            <person name="Parker-Katiraee L."/>
            <person name="Skaug J."/>
            <person name="Khaja R."/>
            <person name="Zhang J."/>
            <person name="Hudek A.K."/>
            <person name="Li M."/>
            <person name="Haddad M."/>
            <person name="Duggan G.E."/>
            <person name="Fernandez B.A."/>
            <person name="Kanematsu E."/>
            <person name="Gentles S."/>
            <person name="Christopoulos C.C."/>
            <person name="Choufani S."/>
            <person name="Kwasnicka D."/>
            <person name="Zheng X.H."/>
            <person name="Lai Z."/>
            <person name="Nusskern D.R."/>
            <person name="Zhang Q."/>
            <person name="Gu Z."/>
            <person name="Lu F."/>
            <person name="Zeesman S."/>
            <person name="Nowaczyk M.J."/>
            <person name="Teshima I."/>
            <person name="Chitayat D."/>
            <person name="Shuman C."/>
            <person name="Weksberg R."/>
            <person name="Zackai E.H."/>
            <person name="Grebe T.A."/>
            <person name="Cox S.R."/>
            <person name="Kirkpatrick S.J."/>
            <person name="Rahman N."/>
            <person name="Friedman J.M."/>
            <person name="Heng H.H.Q."/>
            <person name="Pelicci P.G."/>
            <person name="Lo-Coco F."/>
            <person name="Belloni E."/>
            <person name="Shaffer L.G."/>
            <person name="Pober B."/>
            <person name="Morton C.C."/>
            <person name="Gusella J.F."/>
            <person name="Bruns G.A.P."/>
            <person name="Korf B.R."/>
            <person name="Quade B.J."/>
            <person name="Ligon A.H."/>
            <person name="Ferguson H."/>
            <person name="Higgins A.W."/>
            <person name="Leach N.T."/>
            <person name="Herrick S.R."/>
            <person name="Lemyre E."/>
            <person name="Farra C.G."/>
            <person name="Kim H.-G."/>
            <person name="Summers A.M."/>
            <person name="Gripp K.W."/>
            <person name="Roberts W."/>
            <person name="Szatmari P."/>
            <person name="Winsor E.J.T."/>
            <person name="Grzeschik K.-H."/>
            <person name="Teebi A."/>
            <person name="Minassian B.A."/>
            <person name="Kere J."/>
            <person name="Armengol L."/>
            <person name="Pujana M.A."/>
            <person name="Estivill X."/>
            <person name="Wilson M.D."/>
            <person name="Koop B.F."/>
            <person name="Tosi S."/>
            <person name="Moore G.E."/>
            <person name="Boright A.P."/>
            <person name="Zlotorynski E."/>
            <person name="Kerem B."/>
            <person name="Kroisel P.M."/>
            <person name="Petek E."/>
            <person name="Oscier D.G."/>
            <person name="Mould S.J."/>
            <person name="Doehner H."/>
            <person name="Doehner K."/>
            <person name="Rommens J.M."/>
            <person name="Vincent J.B."/>
            <person name="Venter J.C."/>
            <person name="Li P.W."/>
            <person name="Mural R.J."/>
            <person name="Adams M.D."/>
            <person name="Tsui L.-C."/>
        </authorList>
    </citation>
    <scope>NUCLEOTIDE SEQUENCE [LARGE SCALE GENOMIC DNA]</scope>
</reference>
<reference key="5">
    <citation type="journal article" date="2004" name="Genome Res.">
        <title>The status, quality, and expansion of the NIH full-length cDNA project: the Mammalian Gene Collection (MGC).</title>
        <authorList>
            <consortium name="The MGC Project Team"/>
        </authorList>
    </citation>
    <scope>NUCLEOTIDE SEQUENCE [LARGE SCALE MRNA] (ISOFORMS 1 AND 2)</scope>
    <scope>VARIANTS GLU-701 AND ILE-851</scope>
    <source>
        <tissue>Brain</tissue>
        <tissue>Uterus</tissue>
    </source>
</reference>
<reference key="6">
    <citation type="journal article" date="2006" name="Cell">
        <title>Global, in vivo, and site-specific phosphorylation dynamics in signaling networks.</title>
        <authorList>
            <person name="Olsen J.V."/>
            <person name="Blagoev B."/>
            <person name="Gnad F."/>
            <person name="Macek B."/>
            <person name="Kumar C."/>
            <person name="Mortensen P."/>
            <person name="Mann M."/>
        </authorList>
    </citation>
    <scope>PHOSPHORYLATION [LARGE SCALE ANALYSIS] AT SER-284</scope>
    <scope>IDENTIFICATION BY MASS SPECTROMETRY [LARGE SCALE ANALYSIS]</scope>
    <source>
        <tissue>Cervix carcinoma</tissue>
    </source>
</reference>
<reference key="7">
    <citation type="journal article" date="2006" name="Nat. Biotechnol.">
        <title>A probability-based approach for high-throughput protein phosphorylation analysis and site localization.</title>
        <authorList>
            <person name="Beausoleil S.A."/>
            <person name="Villen J."/>
            <person name="Gerber S.A."/>
            <person name="Rush J."/>
            <person name="Gygi S.P."/>
        </authorList>
    </citation>
    <scope>PHOSPHORYLATION [LARGE SCALE ANALYSIS] AT SER-284</scope>
    <scope>IDENTIFICATION BY MASS SPECTROMETRY [LARGE SCALE ANALYSIS]</scope>
    <source>
        <tissue>Cervix carcinoma</tissue>
    </source>
</reference>
<reference key="8">
    <citation type="journal article" date="2008" name="J. Proteome Res.">
        <title>Combining protein-based IMAC, peptide-based IMAC, and MudPIT for efficient phosphoproteomic analysis.</title>
        <authorList>
            <person name="Cantin G.T."/>
            <person name="Yi W."/>
            <person name="Lu B."/>
            <person name="Park S.K."/>
            <person name="Xu T."/>
            <person name="Lee J.-D."/>
            <person name="Yates J.R. III"/>
        </authorList>
    </citation>
    <scope>PHOSPHORYLATION [LARGE SCALE ANALYSIS] AT SER-284</scope>
    <scope>IDENTIFICATION BY MASS SPECTROMETRY [LARGE SCALE ANALYSIS]</scope>
    <source>
        <tissue>Cervix carcinoma</tissue>
    </source>
</reference>
<reference key="9">
    <citation type="journal article" date="2008" name="J. Proteome Res.">
        <title>Phosphoproteome of resting human platelets.</title>
        <authorList>
            <person name="Zahedi R.P."/>
            <person name="Lewandrowski U."/>
            <person name="Wiesner J."/>
            <person name="Wortelkamp S."/>
            <person name="Moebius J."/>
            <person name="Schuetz C."/>
            <person name="Walter U."/>
            <person name="Gambaryan S."/>
            <person name="Sickmann A."/>
        </authorList>
    </citation>
    <scope>IDENTIFICATION BY MASS SPECTROMETRY [LARGE SCALE ANALYSIS]</scope>
    <source>
        <tissue>Platelet</tissue>
    </source>
</reference>
<reference key="10">
    <citation type="journal article" date="2008" name="Mol. Cell">
        <title>Kinase-selective enrichment enables quantitative phosphoproteomics of the kinome across the cell cycle.</title>
        <authorList>
            <person name="Daub H."/>
            <person name="Olsen J.V."/>
            <person name="Bairlein M."/>
            <person name="Gnad F."/>
            <person name="Oppermann F.S."/>
            <person name="Korner R."/>
            <person name="Greff Z."/>
            <person name="Keri G."/>
            <person name="Stemmann O."/>
            <person name="Mann M."/>
        </authorList>
    </citation>
    <scope>IDENTIFICATION BY MASS SPECTROMETRY [LARGE SCALE ANALYSIS]</scope>
    <source>
        <tissue>Cervix carcinoma</tissue>
    </source>
</reference>
<reference key="11">
    <citation type="journal article" date="2008" name="PLoS Genet.">
        <title>Positive selection and increased antiviral activity associated with the PARP-containing isoform of human zinc-finger antiviral protein.</title>
        <authorList>
            <person name="Kerns J.A."/>
            <person name="Emerman M."/>
            <person name="Malik H.S."/>
        </authorList>
    </citation>
    <scope>FUNCTION</scope>
</reference>
<reference key="12">
    <citation type="journal article" date="2008" name="Proc. Natl. Acad. Sci. U.S.A.">
        <title>A quantitative atlas of mitotic phosphorylation.</title>
        <authorList>
            <person name="Dephoure N."/>
            <person name="Zhou C."/>
            <person name="Villen J."/>
            <person name="Beausoleil S.A."/>
            <person name="Bakalarski C.E."/>
            <person name="Elledge S.J."/>
            <person name="Gygi S.P."/>
        </authorList>
    </citation>
    <scope>PHOSPHORYLATION [LARGE SCALE ANALYSIS] AT SER-271; THR-273; SER-275; SER-284; SER-302; SER-378; SER-387 AND THR-393</scope>
    <scope>IDENTIFICATION BY MASS SPECTROMETRY [LARGE SCALE ANALYSIS]</scope>
    <source>
        <tissue>Cervix carcinoma</tissue>
    </source>
</reference>
<reference key="13">
    <citation type="journal article" date="2008" name="RNA Biol.">
        <title>ZAP-mediated mRNA degradation.</title>
        <authorList>
            <person name="Zhu Y."/>
            <person name="Gao G."/>
        </authorList>
    </citation>
    <scope>REVIEW</scope>
</reference>
<reference key="14">
    <citation type="journal article" date="2009" name="Anal. Chem.">
        <title>Lys-N and trypsin cover complementary parts of the phosphoproteome in a refined SCX-based approach.</title>
        <authorList>
            <person name="Gauci S."/>
            <person name="Helbig A.O."/>
            <person name="Slijper M."/>
            <person name="Krijgsveld J."/>
            <person name="Heck A.J."/>
            <person name="Mohammed S."/>
        </authorList>
    </citation>
    <scope>ACETYLATION [LARGE SCALE ANALYSIS] AT ALA-2</scope>
    <scope>CLEAVAGE OF INITIATOR METHIONINE [LARGE SCALE ANALYSIS]</scope>
    <scope>IDENTIFICATION BY MASS SPECTROMETRY [LARGE SCALE ANALYSIS]</scope>
</reference>
<reference key="15">
    <citation type="journal article" date="2009" name="Sci. Signal.">
        <title>Quantitative phosphoproteomic analysis of T cell receptor signaling reveals system-wide modulation of protein-protein interactions.</title>
        <authorList>
            <person name="Mayya V."/>
            <person name="Lundgren D.H."/>
            <person name="Hwang S.-I."/>
            <person name="Rezaul K."/>
            <person name="Wu L."/>
            <person name="Eng J.K."/>
            <person name="Rodionov V."/>
            <person name="Han D.K."/>
        </authorList>
    </citation>
    <scope>PHOSPHORYLATION [LARGE SCALE ANALYSIS] AT SER-257; SER-284; SER-335; SER-387 AND THR-393</scope>
    <scope>IDENTIFICATION BY MASS SPECTROMETRY [LARGE SCALE ANALYSIS]</scope>
    <source>
        <tissue>Leukemic T-cell</tissue>
    </source>
</reference>
<reference key="16">
    <citation type="journal article" date="2010" name="Biochem. Biophys. Res. Commun.">
        <title>Expression and RNA-binding of human zinc-finger antiviral protein.</title>
        <authorList>
            <person name="Jeong M.S."/>
            <person name="Kim E.J."/>
            <person name="Jang S.B."/>
        </authorList>
    </citation>
    <scope>IDENTIFICATION BY MASS SPECTROMETRY</scope>
    <scope>BIOPHYSICOCHEMICAL PROPERTIES</scope>
    <scope>RNA-BINDING</scope>
    <scope>DOMAIN N-TERMINAL</scope>
</reference>
<reference key="17">
    <citation type="journal article" date="2010" name="J. Virol.">
        <title>Identification of a dominant negative inhibitor of human zinc finger antiviral protein reveals a functional endogenous pool and critical homotypic interactions.</title>
        <authorList>
            <person name="Law L.M."/>
            <person name="Albin O.R."/>
            <person name="Carroll J.W."/>
            <person name="Jones C.T."/>
            <person name="Rice C.M."/>
            <person name="Macdonald M.R."/>
        </authorList>
    </citation>
    <scope>SUBUNIT</scope>
</reference>
<reference key="18">
    <citation type="journal article" date="2010" name="Protein Cell">
        <title>DEXH-Box protein DHX30 is required for optimal function of the zinc-finger antiviral protein.</title>
        <authorList>
            <person name="Ye P."/>
            <person name="Liu S."/>
            <person name="Zhu Y."/>
            <person name="Chen G."/>
            <person name="Gao G."/>
        </authorList>
    </citation>
    <scope>INTERACTION WITH DHX30</scope>
</reference>
<reference key="19">
    <citation type="journal article" date="2010" name="Sci. Signal.">
        <title>Quantitative phosphoproteomics reveals widespread full phosphorylation site occupancy during mitosis.</title>
        <authorList>
            <person name="Olsen J.V."/>
            <person name="Vermeulen M."/>
            <person name="Santamaria A."/>
            <person name="Kumar C."/>
            <person name="Miller M.L."/>
            <person name="Jensen L.J."/>
            <person name="Gnad F."/>
            <person name="Cox J."/>
            <person name="Jensen T.S."/>
            <person name="Nigg E.A."/>
            <person name="Brunak S."/>
            <person name="Mann M."/>
        </authorList>
    </citation>
    <scope>PHOSPHORYLATION [LARGE SCALE ANALYSIS] AT SER-284; SER-302; SER-335; SER-378; THR-393 AND SER-492</scope>
    <scope>PHOSPHORYLATION [LARGE SCALE ANALYSIS] AT SER-572 (ISOFORM 3)</scope>
    <scope>IDENTIFICATION BY MASS SPECTROMETRY [LARGE SCALE ANALYSIS]</scope>
    <source>
        <tissue>Cervix carcinoma</tissue>
    </source>
</reference>
<reference key="20">
    <citation type="journal article" date="2010" name="Trends Biochem. Sci.">
        <title>Toward a unified nomenclature for mammalian ADP-ribosyltransferases.</title>
        <authorList>
            <person name="Hottiger M.O."/>
            <person name="Hassa P.O."/>
            <person name="Luscher B."/>
            <person name="Schuler H."/>
            <person name="Koch-Nolte F."/>
        </authorList>
    </citation>
    <scope>NOMENCLATURE</scope>
</reference>
<reference key="21">
    <citation type="journal article" date="2011" name="BMC Syst. Biol.">
        <title>Initial characterization of the human central proteome.</title>
        <authorList>
            <person name="Burkard T.R."/>
            <person name="Planyavsky M."/>
            <person name="Kaupe I."/>
            <person name="Breitwieser F.P."/>
            <person name="Buerckstuemmer T."/>
            <person name="Bennett K.L."/>
            <person name="Superti-Furga G."/>
            <person name="Colinge J."/>
        </authorList>
    </citation>
    <scope>IDENTIFICATION BY MASS SPECTROMETRY [LARGE SCALE ANALYSIS]</scope>
</reference>
<reference key="22">
    <citation type="journal article" date="2011" name="Nat. Immunol.">
        <title>ZAPS electrifies RIG-I signaling.</title>
        <authorList>
            <person name="Liu H.M."/>
            <person name="Gale M. Jr."/>
        </authorList>
    </citation>
    <scope>REVIEW</scope>
</reference>
<reference key="23">
    <citation type="journal article" date="2011" name="Nat. Immunol.">
        <title>ZAPS is a potent stimulator of signaling mediated by the RNA helicase RIG-I during antiviral responses.</title>
        <authorList>
            <person name="Hayakawa S."/>
            <person name="Shiratori S."/>
            <person name="Yamato H."/>
            <person name="Kameyama T."/>
            <person name="Kitatsuji C."/>
            <person name="Kashigi F."/>
            <person name="Goto S."/>
            <person name="Kameoka S."/>
            <person name="Fujikura D."/>
            <person name="Yamada T."/>
            <person name="Mizutani T."/>
            <person name="Kazumata M."/>
            <person name="Sato M."/>
            <person name="Tanaka J."/>
            <person name="Asaka M."/>
            <person name="Ohba Y."/>
            <person name="Miyazaki T."/>
            <person name="Imamura M."/>
            <person name="Takaoka A."/>
        </authorList>
    </citation>
    <scope>FUNCTION</scope>
    <scope>SUBCELLULAR LOCATION</scope>
    <scope>INDUCTION</scope>
    <scope>INTERACTION WITH RIGI</scope>
</reference>
<reference key="24">
    <citation type="journal article" date="2011" name="Proc. Natl. Acad. Sci. U.S.A.">
        <title>Zinc-finger antiviral protein inhibits HIV-1 infection by selectively targeting multiply spliced viral mRNAs for degradation.</title>
        <authorList>
            <person name="Zhu Y."/>
            <person name="Chen G."/>
            <person name="Lv F."/>
            <person name="Wang X."/>
            <person name="Ji X."/>
            <person name="Xu Y."/>
            <person name="Sun J."/>
            <person name="Wu L."/>
            <person name="Zheng Y.T."/>
            <person name="Gao G."/>
        </authorList>
    </citation>
    <scope>FUNCTION</scope>
    <scope>INTERACTION WITH EXOSC3; EXOSC7; PARN; DCP2; DCP1A AND XRN1</scope>
</reference>
<reference key="25">
    <citation type="journal article" date="2011" name="Sci. Signal.">
        <title>System-wide temporal characterization of the proteome and phosphoproteome of human embryonic stem cell differentiation.</title>
        <authorList>
            <person name="Rigbolt K.T."/>
            <person name="Prokhorova T.A."/>
            <person name="Akimov V."/>
            <person name="Henningsen J."/>
            <person name="Johansen P.T."/>
            <person name="Kratchmarova I."/>
            <person name="Kassem M."/>
            <person name="Mann M."/>
            <person name="Olsen J.V."/>
            <person name="Blagoev B."/>
        </authorList>
    </citation>
    <scope>PHOSPHORYLATION [LARGE SCALE ANALYSIS] AT SER-284</scope>
    <scope>IDENTIFICATION BY MASS SPECTROMETRY [LARGE SCALE ANALYSIS]</scope>
</reference>
<reference key="26">
    <citation type="journal article" date="2012" name="Mol. Cell. Proteomics">
        <title>Comparative large-scale characterisation of plant vs. mammal proteins reveals similar and idiosyncratic N-alpha acetylation features.</title>
        <authorList>
            <person name="Bienvenut W.V."/>
            <person name="Sumpton D."/>
            <person name="Martinez A."/>
            <person name="Lilla S."/>
            <person name="Espagne C."/>
            <person name="Meinnel T."/>
            <person name="Giglione C."/>
        </authorList>
    </citation>
    <scope>ACETYLATION [LARGE SCALE ANALYSIS] AT ALA-2</scope>
    <scope>CLEAVAGE OF INITIATOR METHIONINE [LARGE SCALE ANALYSIS]</scope>
    <scope>IDENTIFICATION BY MASS SPECTROMETRY [LARGE SCALE ANALYSIS]</scope>
</reference>
<reference key="27">
    <citation type="journal article" date="2012" name="PLoS ONE">
        <title>Zinc-finger antiviral protein inhibits XMRV infection.</title>
        <authorList>
            <person name="Wang X."/>
            <person name="Tu F."/>
            <person name="Zhu Y."/>
            <person name="Gao G."/>
        </authorList>
    </citation>
    <scope>FUNCTION</scope>
</reference>
<reference key="28">
    <citation type="journal article" date="2013" name="J. Proteome Res.">
        <title>Toward a comprehensive characterization of a human cancer cell phosphoproteome.</title>
        <authorList>
            <person name="Zhou H."/>
            <person name="Di Palma S."/>
            <person name="Preisinger C."/>
            <person name="Peng M."/>
            <person name="Polat A.N."/>
            <person name="Heck A.J."/>
            <person name="Mohammed S."/>
        </authorList>
    </citation>
    <scope>PHOSPHORYLATION [LARGE SCALE ANALYSIS] AT SER-257; THR-273; SER-275; SER-284; SER-302; SER-335; SER-355; SER-378; THR-393; SER-407; SER-469; SER-492; SER-494; THR-554 AND SER-590</scope>
    <scope>IDENTIFICATION BY MASS SPECTROMETRY [LARGE SCALE ANALYSIS]</scope>
    <source>
        <tissue>Cervix carcinoma</tissue>
        <tissue>Erythroleukemia</tissue>
    </source>
</reference>
<reference key="29">
    <citation type="journal article" date="2014" name="J. Proteomics">
        <title>An enzyme assisted RP-RPLC approach for in-depth analysis of human liver phosphoproteome.</title>
        <authorList>
            <person name="Bian Y."/>
            <person name="Song C."/>
            <person name="Cheng K."/>
            <person name="Dong M."/>
            <person name="Wang F."/>
            <person name="Huang J."/>
            <person name="Sun D."/>
            <person name="Wang L."/>
            <person name="Ye M."/>
            <person name="Zou H."/>
        </authorList>
    </citation>
    <scope>PHOSPHORYLATION [LARGE SCALE ANALYSIS] AT SER-275; SER-284 AND SER-492</scope>
    <scope>IDENTIFICATION BY MASS SPECTROMETRY [LARGE SCALE ANALYSIS]</scope>
    <source>
        <tissue>Liver</tissue>
    </source>
</reference>
<reference key="30">
    <citation type="journal article" date="2014" name="Nat. Commun.">
        <title>Family-wide analysis of poly(ADP-ribose) polymerase activity.</title>
        <authorList>
            <person name="Vyas S."/>
            <person name="Matic I."/>
            <person name="Uchima L."/>
            <person name="Rood J."/>
            <person name="Zaja R."/>
            <person name="Hay R.T."/>
            <person name="Ahel I."/>
            <person name="Chang P."/>
        </authorList>
    </citation>
    <scope>LACK OF ADP-RIBOSYLTRANSFERASE ACTIVITY</scope>
    <scope>NOMENCLATURE</scope>
</reference>
<reference key="31">
    <citation type="journal article" date="2015" name="J. Biol. Chem.">
        <title>Structural basis for lack of ADP-ribosyltransferase activity in poly(ADP-ribose) polymerase-13/zinc finger antiviral protein.</title>
        <authorList>
            <person name="Karlberg T."/>
            <person name="Klepsch M."/>
            <person name="Thorsell A.G."/>
            <person name="Andersson C.D."/>
            <person name="Linusson A."/>
            <person name="Schuler H."/>
        </authorList>
    </citation>
    <scope>X-RAY CRYSTALLOGRAPHY (1.05 ANGSTROMS) OF 724-896</scope>
    <scope>DOMAIN</scope>
    <scope>MUTAGENESIS OF HIS-810 AND ASN-830</scope>
</reference>
<gene>
    <name evidence="28" type="primary">ZC3HAV1</name>
    <name type="synonym">ZC3HDC2</name>
    <name type="ORF">PRO1677</name>
</gene>
<sequence>MADPEVCCFITKILCAHGGRMALDALLQEIALSEPQLCEVLQVAGPDRFVVLETGGEAGITRSVVATTRARVCRRKYCQRPCDNLHLCKLNLLGRCNYSQSERNLCKYSHEVLSEENFKVLKNHELSGLNKEELAVLLLQSDPFFMPEICKSYKGEGRQQICNQQPPCSRLHICDHFTRGNCRFPNCLRSHNLMDRKVLAIMREHGLNPDVVQNIQDICNSKHMQKNPPGPRAPSSHRRNMAYRARSKSRDRFFQGSQEFLASASASAERSCTPSPDQISHRASLEDAPVDDLTRKFTYLGSQDRARPPSGSSKATDLGGTSQAGTSQRFLENGSQEDLLHGNPGSTYLASNSTSAPNWKSLTSWTNDQGARRKTVFSPTLPAARSSLGSLQTPEAVTTRKGTGLLSSDYRIINGKSGTQDIQPGPLFNNNADGVATDITSTRSLNYKSTSSGHREISSPRIQDAGPASRDVQATGRIADDADPRVALVNDSLSDVTSTTSSRVDDHDSEEICLDHLCKGCPLNGSCSKVHFHLPYRWQMLIGKTWTDFEHMETIEKGYCNPGIHLCSVGSYTINFRVMSCDSFPIRRLSTPSSVTKPANSVFTTKWIWYWKNESGTWIQYGEEKDKRKNSNVDSSYLESLYQSCPRGVVPFQAGSRNYELSFQGMIQTNIASKTQKDVIRRPTFVPQWYVQQMKRGPDHQPAKTSSVSLTATFRPQEDFCFLSSKKYKLSEIHHLHPEYVRVSEHFKASMKNFKIEKIKKIENSELLDKFTWKKSQMKEEGKLLFYATSRAYVESICSNNFDSFLHETHENKYGKGIYFAKDAIYSHKNCPYDAKNVVMFVAQVLVGKFTEGNITYTSPPPQFDSCVDTRSNPSVFVIFQKDQVYPQYVIEYTEDKACVIS</sequence>
<evidence type="ECO:0000250" key="1"/>
<evidence type="ECO:0000250" key="2">
    <source>
        <dbReference type="UniProtKB" id="Q3UPF5"/>
    </source>
</evidence>
<evidence type="ECO:0000250" key="3">
    <source>
        <dbReference type="UniProtKB" id="Q8K3Y6"/>
    </source>
</evidence>
<evidence type="ECO:0000255" key="4">
    <source>
        <dbReference type="PROSITE-ProRule" id="PRU00248"/>
    </source>
</evidence>
<evidence type="ECO:0000255" key="5">
    <source>
        <dbReference type="PROSITE-ProRule" id="PRU00397"/>
    </source>
</evidence>
<evidence type="ECO:0000255" key="6">
    <source>
        <dbReference type="PROSITE-ProRule" id="PRU00723"/>
    </source>
</evidence>
<evidence type="ECO:0000256" key="7">
    <source>
        <dbReference type="SAM" id="MobiDB-lite"/>
    </source>
</evidence>
<evidence type="ECO:0000269" key="8">
    <source>
    </source>
</evidence>
<evidence type="ECO:0000269" key="9">
    <source>
    </source>
</evidence>
<evidence type="ECO:0000269" key="10">
    <source>
    </source>
</evidence>
<evidence type="ECO:0000269" key="11">
    <source>
    </source>
</evidence>
<evidence type="ECO:0000269" key="12">
    <source>
    </source>
</evidence>
<evidence type="ECO:0000269" key="13">
    <source>
    </source>
</evidence>
<evidence type="ECO:0000269" key="14">
    <source>
    </source>
</evidence>
<evidence type="ECO:0000269" key="15">
    <source>
    </source>
</evidence>
<evidence type="ECO:0000269" key="16">
    <source>
    </source>
</evidence>
<evidence type="ECO:0000269" key="17">
    <source>
    </source>
</evidence>
<evidence type="ECO:0000269" key="18">
    <source>
    </source>
</evidence>
<evidence type="ECO:0000269" key="19">
    <source>
    </source>
</evidence>
<evidence type="ECO:0000269" key="20">
    <source ref="1"/>
</evidence>
<evidence type="ECO:0000303" key="21">
    <source>
    </source>
</evidence>
<evidence type="ECO:0000303" key="22">
    <source>
    </source>
</evidence>
<evidence type="ECO:0000303" key="23">
    <source>
    </source>
</evidence>
<evidence type="ECO:0000303" key="24">
    <source>
    </source>
</evidence>
<evidence type="ECO:0000303" key="25">
    <source>
    </source>
</evidence>
<evidence type="ECO:0000303" key="26">
    <source ref="1"/>
</evidence>
<evidence type="ECO:0000305" key="27"/>
<evidence type="ECO:0000312" key="28">
    <source>
        <dbReference type="HGNC" id="HGNC:23721"/>
    </source>
</evidence>
<evidence type="ECO:0007744" key="29">
    <source>
    </source>
</evidence>
<evidence type="ECO:0007744" key="30">
    <source>
    </source>
</evidence>
<evidence type="ECO:0007744" key="31">
    <source>
    </source>
</evidence>
<evidence type="ECO:0007744" key="32">
    <source>
    </source>
</evidence>
<evidence type="ECO:0007744" key="33">
    <source>
    </source>
</evidence>
<evidence type="ECO:0007744" key="34">
    <source>
    </source>
</evidence>
<evidence type="ECO:0007744" key="35">
    <source>
    </source>
</evidence>
<evidence type="ECO:0007744" key="36">
    <source>
    </source>
</evidence>
<evidence type="ECO:0007744" key="37">
    <source>
    </source>
</evidence>
<evidence type="ECO:0007744" key="38">
    <source>
    </source>
</evidence>
<evidence type="ECO:0007744" key="39">
    <source>
    </source>
</evidence>
<evidence type="ECO:0007829" key="40">
    <source>
        <dbReference type="PDB" id="2X5Y"/>
    </source>
</evidence>
<evidence type="ECO:0007829" key="41">
    <source>
        <dbReference type="PDB" id="6UEI"/>
    </source>
</evidence>
<evidence type="ECO:0007829" key="42">
    <source>
        <dbReference type="PDB" id="6UEJ"/>
    </source>
</evidence>
<evidence type="ECO:0007829" key="43">
    <source>
        <dbReference type="PDB" id="7TGQ"/>
    </source>
</evidence>
<dbReference type="EMBL" id="AF138863">
    <property type="protein sequence ID" value="AAF61195.1"/>
    <property type="molecule type" value="mRNA"/>
</dbReference>
<dbReference type="EMBL" id="AK055851">
    <property type="protein sequence ID" value="BAB71028.1"/>
    <property type="molecule type" value="mRNA"/>
</dbReference>
<dbReference type="EMBL" id="AK023350">
    <property type="protein sequence ID" value="BAB14537.1"/>
    <property type="molecule type" value="mRNA"/>
</dbReference>
<dbReference type="EMBL" id="BX571742">
    <property type="protein sequence ID" value="CAE11868.1"/>
    <property type="molecule type" value="mRNA"/>
</dbReference>
<dbReference type="EMBL" id="CH236950">
    <property type="protein sequence ID" value="EAL24040.1"/>
    <property type="molecule type" value="Genomic_DNA"/>
</dbReference>
<dbReference type="EMBL" id="CH236950">
    <property type="protein sequence ID" value="EAL24041.1"/>
    <property type="molecule type" value="Genomic_DNA"/>
</dbReference>
<dbReference type="EMBL" id="BC025308">
    <property type="protein sequence ID" value="AAH25308.1"/>
    <property type="molecule type" value="mRNA"/>
</dbReference>
<dbReference type="EMBL" id="BC027462">
    <property type="protein sequence ID" value="AAH27462.1"/>
    <property type="molecule type" value="mRNA"/>
</dbReference>
<dbReference type="EMBL" id="BC033105">
    <property type="protein sequence ID" value="AAH33105.1"/>
    <property type="molecule type" value="mRNA"/>
</dbReference>
<dbReference type="EMBL" id="BC040956">
    <property type="protein sequence ID" value="AAH40956.1"/>
    <property type="molecule type" value="mRNA"/>
</dbReference>
<dbReference type="CCDS" id="CCDS55171.1">
    <molecule id="Q7Z2W4-2"/>
</dbReference>
<dbReference type="CCDS" id="CCDS5851.1">
    <molecule id="Q7Z2W4-1"/>
</dbReference>
<dbReference type="RefSeq" id="NP_064504.2">
    <molecule id="Q7Z2W4-1"/>
    <property type="nucleotide sequence ID" value="NM_020119.3"/>
</dbReference>
<dbReference type="RefSeq" id="NP_078901.3">
    <molecule id="Q7Z2W4-2"/>
    <property type="nucleotide sequence ID" value="NM_024625.3"/>
</dbReference>
<dbReference type="PDB" id="2X5Y">
    <property type="method" value="X-ray"/>
    <property type="resolution" value="1.05 A"/>
    <property type="chains" value="A=724-896"/>
</dbReference>
<dbReference type="PDB" id="4X52">
    <property type="method" value="X-ray"/>
    <property type="resolution" value="2.08 A"/>
    <property type="chains" value="A/B/C/D=726-896"/>
</dbReference>
<dbReference type="PDB" id="6UEI">
    <property type="method" value="X-ray"/>
    <property type="resolution" value="2.51 A"/>
    <property type="chains" value="A=2-227"/>
</dbReference>
<dbReference type="PDB" id="6UEJ">
    <property type="method" value="X-ray"/>
    <property type="resolution" value="2.21 A"/>
    <property type="chains" value="A=2-227"/>
</dbReference>
<dbReference type="PDB" id="7KZH">
    <property type="method" value="X-ray"/>
    <property type="resolution" value="2.49 A"/>
    <property type="chains" value="A=498-699"/>
</dbReference>
<dbReference type="PDB" id="7TGQ">
    <property type="method" value="X-ray"/>
    <property type="resolution" value="2.00 A"/>
    <property type="chains" value="A=498-699"/>
</dbReference>
<dbReference type="PDB" id="9BGL">
    <property type="method" value="X-ray"/>
    <property type="resolution" value="2.29 A"/>
    <property type="chains" value="A=2-227"/>
</dbReference>
<dbReference type="PDBsum" id="2X5Y"/>
<dbReference type="PDBsum" id="4X52"/>
<dbReference type="PDBsum" id="6UEI"/>
<dbReference type="PDBsum" id="6UEJ"/>
<dbReference type="PDBsum" id="7KZH"/>
<dbReference type="PDBsum" id="7TGQ"/>
<dbReference type="PDBsum" id="9BGL"/>
<dbReference type="SMR" id="Q7Z2W4"/>
<dbReference type="BioGRID" id="121203">
    <property type="interactions" value="648"/>
</dbReference>
<dbReference type="CORUM" id="Q7Z2W4"/>
<dbReference type="DIP" id="DIP-37896N"/>
<dbReference type="FunCoup" id="Q7Z2W4">
    <property type="interactions" value="2160"/>
</dbReference>
<dbReference type="IntAct" id="Q7Z2W4">
    <property type="interactions" value="285"/>
</dbReference>
<dbReference type="MINT" id="Q7Z2W4"/>
<dbReference type="STRING" id="9606.ENSP00000242351"/>
<dbReference type="ChEMBL" id="CHEMBL4295879"/>
<dbReference type="GlyCosmos" id="Q7Z2W4">
    <property type="glycosylation" value="2 sites, 1 glycan"/>
</dbReference>
<dbReference type="GlyGen" id="Q7Z2W4">
    <property type="glycosylation" value="9 sites, 3 N-linked glycans (3 sites), 1 O-linked glycan (6 sites)"/>
</dbReference>
<dbReference type="iPTMnet" id="Q7Z2W4"/>
<dbReference type="MetOSite" id="Q7Z2W4"/>
<dbReference type="PhosphoSitePlus" id="Q7Z2W4"/>
<dbReference type="SwissPalm" id="Q7Z2W4"/>
<dbReference type="BioMuta" id="ZC3HAV1"/>
<dbReference type="DMDM" id="223634727"/>
<dbReference type="jPOST" id="Q7Z2W4"/>
<dbReference type="MassIVE" id="Q7Z2W4"/>
<dbReference type="PaxDb" id="9606-ENSP00000242351"/>
<dbReference type="PeptideAtlas" id="Q7Z2W4"/>
<dbReference type="ProteomicsDB" id="68971">
    <molecule id="Q7Z2W4-1"/>
</dbReference>
<dbReference type="ProteomicsDB" id="68972">
    <molecule id="Q7Z2W4-2"/>
</dbReference>
<dbReference type="ProteomicsDB" id="68973">
    <molecule id="Q7Z2W4-3"/>
</dbReference>
<dbReference type="ProteomicsDB" id="68974">
    <molecule id="Q7Z2W4-4"/>
</dbReference>
<dbReference type="ProteomicsDB" id="68975">
    <molecule id="Q7Z2W4-5"/>
</dbReference>
<dbReference type="Pumba" id="Q7Z2W4"/>
<dbReference type="Antibodypedia" id="46163">
    <property type="antibodies" value="130 antibodies from 29 providers"/>
</dbReference>
<dbReference type="DNASU" id="56829"/>
<dbReference type="Ensembl" id="ENST00000242351.10">
    <molecule id="Q7Z2W4-1"/>
    <property type="protein sequence ID" value="ENSP00000242351.5"/>
    <property type="gene ID" value="ENSG00000105939.14"/>
</dbReference>
<dbReference type="Ensembl" id="ENST00000471652.1">
    <molecule id="Q7Z2W4-2"/>
    <property type="protein sequence ID" value="ENSP00000419855.1"/>
    <property type="gene ID" value="ENSG00000105939.14"/>
</dbReference>
<dbReference type="GeneID" id="56829"/>
<dbReference type="KEGG" id="hsa:56829"/>
<dbReference type="MANE-Select" id="ENST00000242351.10">
    <property type="protein sequence ID" value="ENSP00000242351.5"/>
    <property type="RefSeq nucleotide sequence ID" value="NM_020119.4"/>
    <property type="RefSeq protein sequence ID" value="NP_064504.2"/>
</dbReference>
<dbReference type="UCSC" id="uc003vun.4">
    <molecule id="Q7Z2W4-1"/>
    <property type="organism name" value="human"/>
</dbReference>
<dbReference type="AGR" id="HGNC:23721"/>
<dbReference type="CTD" id="56829"/>
<dbReference type="DisGeNET" id="56829"/>
<dbReference type="GeneCards" id="ZC3HAV1"/>
<dbReference type="HGNC" id="HGNC:23721">
    <property type="gene designation" value="ZC3HAV1"/>
</dbReference>
<dbReference type="HPA" id="ENSG00000105939">
    <property type="expression patterns" value="Tissue enhanced (bone)"/>
</dbReference>
<dbReference type="MIM" id="607312">
    <property type="type" value="gene"/>
</dbReference>
<dbReference type="neXtProt" id="NX_Q7Z2W4"/>
<dbReference type="OpenTargets" id="ENSG00000105939"/>
<dbReference type="PharmGKB" id="PA134944289"/>
<dbReference type="VEuPathDB" id="HostDB:ENSG00000105939"/>
<dbReference type="eggNOG" id="ENOG502QSC4">
    <property type="taxonomic scope" value="Eukaryota"/>
</dbReference>
<dbReference type="GeneTree" id="ENSGT00940000162001"/>
<dbReference type="HOGENOM" id="CLU_014825_2_0_1"/>
<dbReference type="InParanoid" id="Q7Z2W4"/>
<dbReference type="OMA" id="KWKSPTS"/>
<dbReference type="OrthoDB" id="6133115at2759"/>
<dbReference type="PAN-GO" id="Q7Z2W4">
    <property type="GO annotations" value="5 GO annotations based on evolutionary models"/>
</dbReference>
<dbReference type="PhylomeDB" id="Q7Z2W4"/>
<dbReference type="TreeFam" id="TF338389"/>
<dbReference type="PathwayCommons" id="Q7Z2W4"/>
<dbReference type="Reactome" id="R-HSA-6802952">
    <property type="pathway name" value="Signaling by BRAF and RAF1 fusions"/>
</dbReference>
<dbReference type="SignaLink" id="Q7Z2W4"/>
<dbReference type="SIGNOR" id="Q7Z2W4"/>
<dbReference type="BioGRID-ORCS" id="56829">
    <property type="hits" value="20 hits in 1172 CRISPR screens"/>
</dbReference>
<dbReference type="CD-CODE" id="232F8A39">
    <property type="entry name" value="P-body"/>
</dbReference>
<dbReference type="CD-CODE" id="DEE660B4">
    <property type="entry name" value="Stress granule"/>
</dbReference>
<dbReference type="ChiTaRS" id="ZC3HAV1">
    <property type="organism name" value="human"/>
</dbReference>
<dbReference type="EvolutionaryTrace" id="Q7Z2W4"/>
<dbReference type="GeneWiki" id="ZC3HAV1"/>
<dbReference type="GenomeRNAi" id="56829"/>
<dbReference type="Pharos" id="Q7Z2W4">
    <property type="development level" value="Tbio"/>
</dbReference>
<dbReference type="PRO" id="PR:Q7Z2W4"/>
<dbReference type="Proteomes" id="UP000005640">
    <property type="component" value="Chromosome 7"/>
</dbReference>
<dbReference type="RNAct" id="Q7Z2W4">
    <property type="molecule type" value="protein"/>
</dbReference>
<dbReference type="Bgee" id="ENSG00000105939">
    <property type="expression patterns" value="Expressed in trabecular bone tissue and 198 other cell types or tissues"/>
</dbReference>
<dbReference type="ExpressionAtlas" id="Q7Z2W4">
    <property type="expression patterns" value="baseline and differential"/>
</dbReference>
<dbReference type="GO" id="GO:0005737">
    <property type="term" value="C:cytoplasm"/>
    <property type="evidence" value="ECO:0000314"/>
    <property type="project" value="UniProtKB"/>
</dbReference>
<dbReference type="GO" id="GO:0005829">
    <property type="term" value="C:cytosol"/>
    <property type="evidence" value="ECO:0000314"/>
    <property type="project" value="HPA"/>
</dbReference>
<dbReference type="GO" id="GO:0005770">
    <property type="term" value="C:late endosome"/>
    <property type="evidence" value="ECO:0007669"/>
    <property type="project" value="Ensembl"/>
</dbReference>
<dbReference type="GO" id="GO:0005764">
    <property type="term" value="C:lysosome"/>
    <property type="evidence" value="ECO:0007669"/>
    <property type="project" value="Ensembl"/>
</dbReference>
<dbReference type="GO" id="GO:0005634">
    <property type="term" value="C:nucleus"/>
    <property type="evidence" value="ECO:0000318"/>
    <property type="project" value="GO_Central"/>
</dbReference>
<dbReference type="GO" id="GO:0045296">
    <property type="term" value="F:cadherin binding"/>
    <property type="evidence" value="ECO:0007005"/>
    <property type="project" value="BHF-UCL"/>
</dbReference>
<dbReference type="GO" id="GO:0003723">
    <property type="term" value="F:RNA binding"/>
    <property type="evidence" value="ECO:0007005"/>
    <property type="project" value="UniProtKB"/>
</dbReference>
<dbReference type="GO" id="GO:0008270">
    <property type="term" value="F:zinc ion binding"/>
    <property type="evidence" value="ECO:0007669"/>
    <property type="project" value="UniProtKB-KW"/>
</dbReference>
<dbReference type="GO" id="GO:0051607">
    <property type="term" value="P:defense response to virus"/>
    <property type="evidence" value="ECO:0007669"/>
    <property type="project" value="UniProtKB-KW"/>
</dbReference>
<dbReference type="GO" id="GO:0045087">
    <property type="term" value="P:innate immune response"/>
    <property type="evidence" value="ECO:0007669"/>
    <property type="project" value="UniProtKB-KW"/>
</dbReference>
<dbReference type="GO" id="GO:0045071">
    <property type="term" value="P:negative regulation of viral genome replication"/>
    <property type="evidence" value="ECO:0000314"/>
    <property type="project" value="UniProtKB"/>
</dbReference>
<dbReference type="GO" id="GO:0043123">
    <property type="term" value="P:positive regulation of canonical NF-kappaB signal transduction"/>
    <property type="evidence" value="ECO:0000315"/>
    <property type="project" value="UniProtKB"/>
</dbReference>
<dbReference type="GO" id="GO:0032727">
    <property type="term" value="P:positive regulation of interferon-alpha production"/>
    <property type="evidence" value="ECO:0000314"/>
    <property type="project" value="UniProtKB"/>
</dbReference>
<dbReference type="GO" id="GO:0032728">
    <property type="term" value="P:positive regulation of interferon-beta production"/>
    <property type="evidence" value="ECO:0000314"/>
    <property type="project" value="UniProtKB"/>
</dbReference>
<dbReference type="GO" id="GO:0061014">
    <property type="term" value="P:positive regulation of mRNA catabolic process"/>
    <property type="evidence" value="ECO:0000314"/>
    <property type="project" value="UniProtKB"/>
</dbReference>
<dbReference type="GO" id="GO:1900246">
    <property type="term" value="P:positive regulation of RIG-I signaling pathway"/>
    <property type="evidence" value="ECO:0000315"/>
    <property type="project" value="UniProtKB"/>
</dbReference>
<dbReference type="GO" id="GO:0032481">
    <property type="term" value="P:positive regulation of type I interferon production"/>
    <property type="evidence" value="ECO:0000318"/>
    <property type="project" value="GO_Central"/>
</dbReference>
<dbReference type="GO" id="GO:0009615">
    <property type="term" value="P:response to virus"/>
    <property type="evidence" value="ECO:0000314"/>
    <property type="project" value="UniProtKB"/>
</dbReference>
<dbReference type="CDD" id="cd01439">
    <property type="entry name" value="TCCD_inducible_PARP_like"/>
    <property type="match status" value="1"/>
</dbReference>
<dbReference type="FunFam" id="3.30.720.50:FF:000007">
    <property type="entry name" value="CCCH-type zinc finger antiviral protein"/>
    <property type="match status" value="1"/>
</dbReference>
<dbReference type="FunFam" id="1.10.10.10:FF:000428">
    <property type="entry name" value="Zinc finger CCCH-type containing, antiviral 1"/>
    <property type="match status" value="1"/>
</dbReference>
<dbReference type="Gene3D" id="3.30.720.50">
    <property type="match status" value="1"/>
</dbReference>
<dbReference type="Gene3D" id="3.90.228.10">
    <property type="match status" value="1"/>
</dbReference>
<dbReference type="Gene3D" id="1.10.10.10">
    <property type="entry name" value="Winged helix-like DNA-binding domain superfamily/Winged helix DNA-binding domain"/>
    <property type="match status" value="1"/>
</dbReference>
<dbReference type="InterPro" id="IPR051712">
    <property type="entry name" value="ARTD-AVP"/>
</dbReference>
<dbReference type="InterPro" id="IPR012317">
    <property type="entry name" value="Poly(ADP-ribose)pol_cat_dom"/>
</dbReference>
<dbReference type="InterPro" id="IPR036388">
    <property type="entry name" value="WH-like_DNA-bd_sf"/>
</dbReference>
<dbReference type="InterPro" id="IPR004170">
    <property type="entry name" value="WWE_dom"/>
</dbReference>
<dbReference type="InterPro" id="IPR037197">
    <property type="entry name" value="WWE_dom_sf"/>
</dbReference>
<dbReference type="InterPro" id="IPR041360">
    <property type="entry name" value="ZAP_HTH"/>
</dbReference>
<dbReference type="InterPro" id="IPR040954">
    <property type="entry name" value="Znf-CCCH_8"/>
</dbReference>
<dbReference type="InterPro" id="IPR000571">
    <property type="entry name" value="Znf_CCCH"/>
</dbReference>
<dbReference type="PANTHER" id="PTHR45740">
    <property type="entry name" value="POLY [ADP-RIBOSE] POLYMERASE"/>
    <property type="match status" value="1"/>
</dbReference>
<dbReference type="PANTHER" id="PTHR45740:SF8">
    <property type="entry name" value="ZINC FINGER CCCH-TYPE ANTIVIRAL PROTEIN 1"/>
    <property type="match status" value="1"/>
</dbReference>
<dbReference type="Pfam" id="PF18606">
    <property type="entry name" value="HTH_53"/>
    <property type="match status" value="1"/>
</dbReference>
<dbReference type="Pfam" id="PF00644">
    <property type="entry name" value="PARP"/>
    <property type="match status" value="1"/>
</dbReference>
<dbReference type="Pfam" id="PF02825">
    <property type="entry name" value="WWE"/>
    <property type="match status" value="1"/>
</dbReference>
<dbReference type="Pfam" id="PF23466">
    <property type="entry name" value="WWE_4"/>
    <property type="match status" value="1"/>
</dbReference>
<dbReference type="Pfam" id="PF18633">
    <property type="entry name" value="zf-CCCH_8"/>
    <property type="match status" value="1"/>
</dbReference>
<dbReference type="Pfam" id="PF25261">
    <property type="entry name" value="zf-CCCH_PARP12"/>
    <property type="match status" value="1"/>
</dbReference>
<dbReference type="SUPFAM" id="SSF56399">
    <property type="entry name" value="ADP-ribosylation"/>
    <property type="match status" value="1"/>
</dbReference>
<dbReference type="SUPFAM" id="SSF117839">
    <property type="entry name" value="WWE domain"/>
    <property type="match status" value="1"/>
</dbReference>
<dbReference type="PROSITE" id="PS51059">
    <property type="entry name" value="PARP_CATALYTIC"/>
    <property type="match status" value="1"/>
</dbReference>
<dbReference type="PROSITE" id="PS50918">
    <property type="entry name" value="WWE"/>
    <property type="match status" value="1"/>
</dbReference>
<dbReference type="PROSITE" id="PS50103">
    <property type="entry name" value="ZF_C3H1"/>
    <property type="match status" value="3"/>
</dbReference>
<proteinExistence type="evidence at protein level"/>
<keyword id="KW-0002">3D-structure</keyword>
<keyword id="KW-0007">Acetylation</keyword>
<keyword id="KW-0025">Alternative splicing</keyword>
<keyword id="KW-0051">Antiviral defense</keyword>
<keyword id="KW-0963">Cytoplasm</keyword>
<keyword id="KW-0391">Immunity</keyword>
<keyword id="KW-0399">Innate immunity</keyword>
<keyword id="KW-0479">Metal-binding</keyword>
<keyword id="KW-0539">Nucleus</keyword>
<keyword id="KW-0597">Phosphoprotein</keyword>
<keyword id="KW-1267">Proteomics identification</keyword>
<keyword id="KW-1185">Reference proteome</keyword>
<keyword id="KW-0677">Repeat</keyword>
<keyword id="KW-0694">RNA-binding</keyword>
<keyword id="KW-0862">Zinc</keyword>
<keyword id="KW-0863">Zinc-finger</keyword>
<comment type="function">
    <text evidence="11 14 16 17">Antiviral protein which inhibits the replication of viruses by recruiting the cellular RNA degradation machineries to degrade the viral mRNAs. Binds to a ZAP-responsive element (ZRE) present in the target viral mRNA, recruits cellular poly(A)-specific ribonuclease PARN to remove the poly(A) tail, and the 3'-5' exoribonuclease complex exosome to degrade the RNA body from the 3'-end. It also recruits the decapping complex DCP1-DCP2 through RNA helicase p72 (DDX17) to remove the cap structure of the viral mRNA to initiate its degradation from the 5'-end. Its target viruses belong to families which include retroviridae: human immunodeficiency virus type 1 (HIV-1), moloney and murine leukemia virus (MoMLV) and xenotropic MuLV-related virus (XMRV), filoviridae: ebola virus (EBOV) and marburg virus (MARV), togaviridae: sindbis virus (SINV) and Ross river virus (RRV). Specifically targets the multiply spliced but not unspliced or singly spliced HIV-1 mRNAs for degradation. Isoform 1 is a more potent viral inhibitor than isoform 2. Isoform 2 acts as a positive regulator of RIGI signaling resulting in activation of the downstream effector IRF3 leading to the expression of type I IFNs and IFN stimulated genes (ISGs).</text>
</comment>
<comment type="biophysicochemical properties">
    <temperatureDependence>
        <text evidence="13">Thermostable.</text>
    </temperatureDependence>
</comment>
<comment type="subunit">
    <text evidence="1 12 14 15 16">Homodimer or homooligomer. Homooligomerization is essential for its antiviral activity. Interacts with EXOSC5 (By similarity). Interacts (via N-terminal domain) with DDX17 in an RNA-independent manner (By similarity). Interacts with EXOSC3, EXOSC7, DCP2 and DCP1A. Interacts with PARN in an RNA-independent manner. Interacts with XRN1 in an RNA-dependent manner. Isoform 2 interacts (via zinc-fingers) with RIGI in an RNA-dependent manner. Interacts (via N-terminal domain) with DHX30 (via N-terminus) in an RNA-independent manner.</text>
</comment>
<comment type="interaction">
    <interactant intactId="EBI-922540">
        <id>Q7Z2W4</id>
    </interactant>
    <interactant intactId="EBI-12012928">
        <id>P60371</id>
        <label>KRTAP10-6</label>
    </interactant>
    <organismsDiffer>false</organismsDiffer>
    <experiments>3</experiments>
</comment>
<comment type="interaction">
    <interactant intactId="EBI-922540">
        <id>Q7Z2W4</id>
    </interactant>
    <interactant intactId="EBI-724076">
        <id>Q99750</id>
        <label>MDFI</label>
    </interactant>
    <organismsDiffer>false</organismsDiffer>
    <experiments>3</experiments>
</comment>
<comment type="interaction">
    <interactant intactId="EBI-922540">
        <id>Q7Z2W4</id>
    </interactant>
    <interactant intactId="EBI-995350">
        <id>O95786</id>
        <label>RIGI</label>
    </interactant>
    <organismsDiffer>false</organismsDiffer>
    <experiments>3</experiments>
</comment>
<comment type="interaction">
    <interactant intactId="EBI-922559">
        <id>Q7Z2W4-2</id>
    </interactant>
    <interactant intactId="EBI-995350">
        <id>O95786</id>
        <label>RIGI</label>
    </interactant>
    <organismsDiffer>false</organismsDiffer>
    <experiments>4</experiments>
</comment>
<comment type="subcellular location">
    <molecule>Isoform 1</molecule>
    <subcellularLocation>
        <location evidence="3">Cytoplasm</location>
    </subcellularLocation>
    <subcellularLocation>
        <location evidence="3">Nucleus</location>
    </subcellularLocation>
    <text evidence="3">Localizes in the cytoplasm at steady state, but shuttles between nucleus and cytoplasm in a XPO1-dependent manner.</text>
</comment>
<comment type="subcellular location">
    <molecule>Isoform 2</molecule>
    <subcellularLocation>
        <location evidence="14">Cytoplasm</location>
    </subcellularLocation>
</comment>
<comment type="alternative products">
    <event type="alternative splicing"/>
    <isoform>
        <id>Q7Z2W4-1</id>
        <name>1</name>
        <name>ZAPL</name>
        <sequence type="displayed"/>
    </isoform>
    <isoform>
        <id>Q7Z2W4-2</id>
        <name>2</name>
        <name evidence="24">ZAPS</name>
        <sequence type="described" ref="VSP_010269"/>
    </isoform>
    <isoform>
        <id>Q7Z2W4-3</id>
        <name>3</name>
        <sequence type="described" ref="VSP_010270 VSP_010271"/>
    </isoform>
    <isoform>
        <id>Q7Z2W4-4</id>
        <name>4</name>
        <sequence type="described" ref="VSP_010268"/>
    </isoform>
    <isoform>
        <id>Q7Z2W4-5</id>
        <name>5</name>
        <sequence type="described" ref="VSP_010268 VSP_010269"/>
    </isoform>
</comment>
<comment type="induction">
    <text evidence="14">By type I interferon (IFN) and viruses. Isoform 2 is up-regulated by 3'-PPP-RNA.</text>
</comment>
<comment type="domain">
    <text evidence="13 18 19">The N-terminal domain is sufficient to bind to viral RNAs and promote their degradation. The second and fourth zinc fingers are involved in binding to specific viral RNAs (PubMed:20451500). Contains a divergent PARP homology ADP-ribosyltransferase domain which lacks the structural requirements for NAD[+] binding (PubMed:25635049). It is therefore inactive (PubMed:25043379, PubMed:25635049).</text>
</comment>
<comment type="PTM">
    <text evidence="3">Phosphorylation at Ser-275 is essential for sequential phosphorylation of Ser-271, Ser-267, Ser-263 and Ser-257 by GSK3-beta. Phosphorylation by GSK3-beta enhances its antiviral activity (By similarity).</text>
</comment>
<comment type="similarity">
    <text evidence="27">Belongs to the ARTD/PARP family.</text>
</comment>
<name>ZCCHV_HUMAN</name>
<organism>
    <name type="scientific">Homo sapiens</name>
    <name type="common">Human</name>
    <dbReference type="NCBI Taxonomy" id="9606"/>
    <lineage>
        <taxon>Eukaryota</taxon>
        <taxon>Metazoa</taxon>
        <taxon>Chordata</taxon>
        <taxon>Craniata</taxon>
        <taxon>Vertebrata</taxon>
        <taxon>Euteleostomi</taxon>
        <taxon>Mammalia</taxon>
        <taxon>Eutheria</taxon>
        <taxon>Euarchontoglires</taxon>
        <taxon>Primates</taxon>
        <taxon>Haplorrhini</taxon>
        <taxon>Catarrhini</taxon>
        <taxon>Hominidae</taxon>
        <taxon>Homo</taxon>
    </lineage>
</organism>